<proteinExistence type="inferred from homology"/>
<accession>Q7V6M3</accession>
<feature type="chain" id="PRO_0000216413" description="Cytochrome b6-f complex subunit 5">
    <location>
        <begin position="1"/>
        <end position="38"/>
    </location>
</feature>
<feature type="transmembrane region" description="Helical" evidence="1">
    <location>
        <begin position="5"/>
        <end position="25"/>
    </location>
</feature>
<reference key="1">
    <citation type="journal article" date="2003" name="Nature">
        <title>Genome divergence in two Prochlorococcus ecotypes reflects oceanic niche differentiation.</title>
        <authorList>
            <person name="Rocap G."/>
            <person name="Larimer F.W."/>
            <person name="Lamerdin J.E."/>
            <person name="Malfatti S."/>
            <person name="Chain P."/>
            <person name="Ahlgren N.A."/>
            <person name="Arellano A."/>
            <person name="Coleman M."/>
            <person name="Hauser L."/>
            <person name="Hess W.R."/>
            <person name="Johnson Z.I."/>
            <person name="Land M.L."/>
            <person name="Lindell D."/>
            <person name="Post A.F."/>
            <person name="Regala W."/>
            <person name="Shah M."/>
            <person name="Shaw S.L."/>
            <person name="Steglich C."/>
            <person name="Sullivan M.B."/>
            <person name="Ting C.S."/>
            <person name="Tolonen A."/>
            <person name="Webb E.A."/>
            <person name="Zinser E.R."/>
            <person name="Chisholm S.W."/>
        </authorList>
    </citation>
    <scope>NUCLEOTIDE SEQUENCE [LARGE SCALE GENOMIC DNA]</scope>
    <source>
        <strain>MIT 9313</strain>
    </source>
</reference>
<name>PETG_PROMM</name>
<evidence type="ECO:0000255" key="1">
    <source>
        <dbReference type="HAMAP-Rule" id="MF_00432"/>
    </source>
</evidence>
<protein>
    <recommendedName>
        <fullName evidence="1">Cytochrome b6-f complex subunit 5</fullName>
    </recommendedName>
    <alternativeName>
        <fullName evidence="1">Cytochrome b6-f complex subunit PetG</fullName>
    </alternativeName>
    <alternativeName>
        <fullName evidence="1">Cytochrome b6-f complex subunit V</fullName>
    </alternativeName>
</protein>
<sequence length="38" mass="4301">MIEPLLCGIVLGLIPVTLLGLFVDAWNQYRRDTVLGDW</sequence>
<organism>
    <name type="scientific">Prochlorococcus marinus (strain MIT 9313)</name>
    <dbReference type="NCBI Taxonomy" id="74547"/>
    <lineage>
        <taxon>Bacteria</taxon>
        <taxon>Bacillati</taxon>
        <taxon>Cyanobacteriota</taxon>
        <taxon>Cyanophyceae</taxon>
        <taxon>Synechococcales</taxon>
        <taxon>Prochlorococcaceae</taxon>
        <taxon>Prochlorococcus</taxon>
    </lineage>
</organism>
<gene>
    <name evidence="1" type="primary">petG</name>
    <name type="ordered locus">PMT_1130</name>
</gene>
<comment type="function">
    <text evidence="1">Component of the cytochrome b6-f complex, which mediates electron transfer between photosystem II (PSII) and photosystem I (PSI), cyclic electron flow around PSI, and state transitions. PetG is required for either the stability or assembly of the cytochrome b6-f complex.</text>
</comment>
<comment type="subunit">
    <text evidence="1">The 4 large subunits of the cytochrome b6-f complex are cytochrome b6, subunit IV (17 kDa polypeptide, PetD), cytochrome f and the Rieske protein, while the 4 small subunits are PetG, PetL, PetM and PetN. The complex functions as a dimer.</text>
</comment>
<comment type="subcellular location">
    <subcellularLocation>
        <location evidence="1">Cellular thylakoid membrane</location>
        <topology evidence="1">Single-pass membrane protein</topology>
    </subcellularLocation>
</comment>
<comment type="similarity">
    <text evidence="1">Belongs to the PetG family.</text>
</comment>
<keyword id="KW-0249">Electron transport</keyword>
<keyword id="KW-0472">Membrane</keyword>
<keyword id="KW-0602">Photosynthesis</keyword>
<keyword id="KW-1185">Reference proteome</keyword>
<keyword id="KW-0793">Thylakoid</keyword>
<keyword id="KW-0812">Transmembrane</keyword>
<keyword id="KW-1133">Transmembrane helix</keyword>
<keyword id="KW-0813">Transport</keyword>
<dbReference type="EMBL" id="BX548175">
    <property type="protein sequence ID" value="CAE21305.1"/>
    <property type="molecule type" value="Genomic_DNA"/>
</dbReference>
<dbReference type="RefSeq" id="WP_011130502.1">
    <property type="nucleotide sequence ID" value="NC_005071.1"/>
</dbReference>
<dbReference type="SMR" id="Q7V6M3"/>
<dbReference type="KEGG" id="pmt:PMT_1130"/>
<dbReference type="HOGENOM" id="CLU_216962_0_0_3"/>
<dbReference type="OrthoDB" id="428448at2"/>
<dbReference type="Proteomes" id="UP000001423">
    <property type="component" value="Chromosome"/>
</dbReference>
<dbReference type="GO" id="GO:0009512">
    <property type="term" value="C:cytochrome b6f complex"/>
    <property type="evidence" value="ECO:0007669"/>
    <property type="project" value="InterPro"/>
</dbReference>
<dbReference type="GO" id="GO:0031676">
    <property type="term" value="C:plasma membrane-derived thylakoid membrane"/>
    <property type="evidence" value="ECO:0007669"/>
    <property type="project" value="UniProtKB-SubCell"/>
</dbReference>
<dbReference type="GO" id="GO:0045158">
    <property type="term" value="F:electron transporter, transferring electrons within cytochrome b6/f complex of photosystem II activity"/>
    <property type="evidence" value="ECO:0007669"/>
    <property type="project" value="UniProtKB-UniRule"/>
</dbReference>
<dbReference type="GO" id="GO:0017004">
    <property type="term" value="P:cytochrome complex assembly"/>
    <property type="evidence" value="ECO:0007669"/>
    <property type="project" value="UniProtKB-UniRule"/>
</dbReference>
<dbReference type="GO" id="GO:0015979">
    <property type="term" value="P:photosynthesis"/>
    <property type="evidence" value="ECO:0007669"/>
    <property type="project" value="UniProtKB-KW"/>
</dbReference>
<dbReference type="HAMAP" id="MF_00432">
    <property type="entry name" value="Cytb6_f_PetG"/>
    <property type="match status" value="1"/>
</dbReference>
<dbReference type="InterPro" id="IPR003683">
    <property type="entry name" value="Cyt_6/f_cplx_su5"/>
</dbReference>
<dbReference type="InterPro" id="IPR036099">
    <property type="entry name" value="Cyt_6/f_cplx_su5_sf"/>
</dbReference>
<dbReference type="NCBIfam" id="NF001907">
    <property type="entry name" value="PRK00665.1"/>
    <property type="match status" value="1"/>
</dbReference>
<dbReference type="Pfam" id="PF02529">
    <property type="entry name" value="PetG"/>
    <property type="match status" value="1"/>
</dbReference>
<dbReference type="PIRSF" id="PIRSF000034">
    <property type="entry name" value="Cyt_b6-f_V"/>
    <property type="match status" value="1"/>
</dbReference>
<dbReference type="SUPFAM" id="SSF103446">
    <property type="entry name" value="PetG subunit of the cytochrome b6f complex"/>
    <property type="match status" value="1"/>
</dbReference>